<reference key="1">
    <citation type="journal article" date="2003" name="Nature">
        <title>The genome sequence of Bacillus anthracis Ames and comparison to closely related bacteria.</title>
        <authorList>
            <person name="Read T.D."/>
            <person name="Peterson S.N."/>
            <person name="Tourasse N.J."/>
            <person name="Baillie L.W."/>
            <person name="Paulsen I.T."/>
            <person name="Nelson K.E."/>
            <person name="Tettelin H."/>
            <person name="Fouts D.E."/>
            <person name="Eisen J.A."/>
            <person name="Gill S.R."/>
            <person name="Holtzapple E.K."/>
            <person name="Okstad O.A."/>
            <person name="Helgason E."/>
            <person name="Rilstone J."/>
            <person name="Wu M."/>
            <person name="Kolonay J.F."/>
            <person name="Beanan M.J."/>
            <person name="Dodson R.J."/>
            <person name="Brinkac L.M."/>
            <person name="Gwinn M.L."/>
            <person name="DeBoy R.T."/>
            <person name="Madpu R."/>
            <person name="Daugherty S.C."/>
            <person name="Durkin A.S."/>
            <person name="Haft D.H."/>
            <person name="Nelson W.C."/>
            <person name="Peterson J.D."/>
            <person name="Pop M."/>
            <person name="Khouri H.M."/>
            <person name="Radune D."/>
            <person name="Benton J.L."/>
            <person name="Mahamoud Y."/>
            <person name="Jiang L."/>
            <person name="Hance I.R."/>
            <person name="Weidman J.F."/>
            <person name="Berry K.J."/>
            <person name="Plaut R.D."/>
            <person name="Wolf A.M."/>
            <person name="Watkins K.L."/>
            <person name="Nierman W.C."/>
            <person name="Hazen A."/>
            <person name="Cline R.T."/>
            <person name="Redmond C."/>
            <person name="Thwaite J.E."/>
            <person name="White O."/>
            <person name="Salzberg S.L."/>
            <person name="Thomason B."/>
            <person name="Friedlander A.M."/>
            <person name="Koehler T.M."/>
            <person name="Hanna P.C."/>
            <person name="Kolstoe A.-B."/>
            <person name="Fraser C.M."/>
        </authorList>
    </citation>
    <scope>NUCLEOTIDE SEQUENCE [LARGE SCALE GENOMIC DNA]</scope>
    <source>
        <strain>Ames / isolate Porton</strain>
    </source>
</reference>
<reference key="2">
    <citation type="journal article" date="2009" name="J. Bacteriol.">
        <title>The complete genome sequence of Bacillus anthracis Ames 'Ancestor'.</title>
        <authorList>
            <person name="Ravel J."/>
            <person name="Jiang L."/>
            <person name="Stanley S.T."/>
            <person name="Wilson M.R."/>
            <person name="Decker R.S."/>
            <person name="Read T.D."/>
            <person name="Worsham P."/>
            <person name="Keim P.S."/>
            <person name="Salzberg S.L."/>
            <person name="Fraser-Liggett C.M."/>
            <person name="Rasko D.A."/>
        </authorList>
    </citation>
    <scope>NUCLEOTIDE SEQUENCE [LARGE SCALE GENOMIC DNA]</scope>
    <source>
        <strain>Ames ancestor</strain>
    </source>
</reference>
<reference key="3">
    <citation type="submission" date="2004-01" db="EMBL/GenBank/DDBJ databases">
        <title>Complete genome sequence of Bacillus anthracis Sterne.</title>
        <authorList>
            <person name="Brettin T.S."/>
            <person name="Bruce D."/>
            <person name="Challacombe J.F."/>
            <person name="Gilna P."/>
            <person name="Han C."/>
            <person name="Hill K."/>
            <person name="Hitchcock P."/>
            <person name="Jackson P."/>
            <person name="Keim P."/>
            <person name="Longmire J."/>
            <person name="Lucas S."/>
            <person name="Okinaka R."/>
            <person name="Richardson P."/>
            <person name="Rubin E."/>
            <person name="Tice H."/>
        </authorList>
    </citation>
    <scope>NUCLEOTIDE SEQUENCE [LARGE SCALE GENOMIC DNA]</scope>
    <source>
        <strain>Sterne</strain>
    </source>
</reference>
<comment type="function">
    <text evidence="1">Catalyzes the reversible conversion of ribose-5-phosphate to ribulose 5-phosphate.</text>
</comment>
<comment type="catalytic activity">
    <reaction evidence="1">
        <text>aldehydo-D-ribose 5-phosphate = D-ribulose 5-phosphate</text>
        <dbReference type="Rhea" id="RHEA:14657"/>
        <dbReference type="ChEBI" id="CHEBI:58121"/>
        <dbReference type="ChEBI" id="CHEBI:58273"/>
        <dbReference type="EC" id="5.3.1.6"/>
    </reaction>
</comment>
<comment type="pathway">
    <text evidence="1">Carbohydrate degradation; pentose phosphate pathway; D-ribose 5-phosphate from D-ribulose 5-phosphate (non-oxidative stage): step 1/1.</text>
</comment>
<comment type="subunit">
    <text evidence="1">Homodimer.</text>
</comment>
<comment type="similarity">
    <text evidence="1">Belongs to the ribose 5-phosphate isomerase family.</text>
</comment>
<protein>
    <recommendedName>
        <fullName evidence="1">Ribose-5-phosphate isomerase A</fullName>
        <ecNumber evidence="1">5.3.1.6</ecNumber>
    </recommendedName>
    <alternativeName>
        <fullName evidence="1">Phosphoriboisomerase A</fullName>
        <shortName evidence="1">PRI</shortName>
    </alternativeName>
</protein>
<evidence type="ECO:0000255" key="1">
    <source>
        <dbReference type="HAMAP-Rule" id="MF_00170"/>
    </source>
</evidence>
<gene>
    <name evidence="1" type="primary">rpiA</name>
    <name type="ordered locus">BA_2791</name>
    <name type="ordered locus">GBAA_2791</name>
    <name type="ordered locus">BAS2602</name>
</gene>
<dbReference type="EC" id="5.3.1.6" evidence="1"/>
<dbReference type="EMBL" id="AE016879">
    <property type="protein sequence ID" value="AAP26626.1"/>
    <property type="molecule type" value="Genomic_DNA"/>
</dbReference>
<dbReference type="EMBL" id="AE017334">
    <property type="protein sequence ID" value="AAT31908.1"/>
    <property type="molecule type" value="Genomic_DNA"/>
</dbReference>
<dbReference type="EMBL" id="AE017225">
    <property type="protein sequence ID" value="AAT54912.1"/>
    <property type="molecule type" value="Genomic_DNA"/>
</dbReference>
<dbReference type="RefSeq" id="NP_845140.1">
    <property type="nucleotide sequence ID" value="NC_003997.3"/>
</dbReference>
<dbReference type="RefSeq" id="WP_000364536.1">
    <property type="nucleotide sequence ID" value="NZ_WXXJ01000026.1"/>
</dbReference>
<dbReference type="RefSeq" id="YP_028861.1">
    <property type="nucleotide sequence ID" value="NC_005945.1"/>
</dbReference>
<dbReference type="SMR" id="Q81PL1"/>
<dbReference type="STRING" id="261594.GBAA_2791"/>
<dbReference type="DNASU" id="1088394"/>
<dbReference type="GeneID" id="45022629"/>
<dbReference type="KEGG" id="ban:BA_2791"/>
<dbReference type="KEGG" id="bar:GBAA_2791"/>
<dbReference type="KEGG" id="bat:BAS2602"/>
<dbReference type="PATRIC" id="fig|198094.11.peg.2774"/>
<dbReference type="eggNOG" id="COG0120">
    <property type="taxonomic scope" value="Bacteria"/>
</dbReference>
<dbReference type="HOGENOM" id="CLU_056590_1_0_9"/>
<dbReference type="OMA" id="ACHVQEK"/>
<dbReference type="OrthoDB" id="5870696at2"/>
<dbReference type="UniPathway" id="UPA00115">
    <property type="reaction ID" value="UER00412"/>
</dbReference>
<dbReference type="Proteomes" id="UP000000427">
    <property type="component" value="Chromosome"/>
</dbReference>
<dbReference type="Proteomes" id="UP000000594">
    <property type="component" value="Chromosome"/>
</dbReference>
<dbReference type="GO" id="GO:0004751">
    <property type="term" value="F:ribose-5-phosphate isomerase activity"/>
    <property type="evidence" value="ECO:0007669"/>
    <property type="project" value="UniProtKB-UniRule"/>
</dbReference>
<dbReference type="GO" id="GO:0009052">
    <property type="term" value="P:pentose-phosphate shunt, non-oxidative branch"/>
    <property type="evidence" value="ECO:0007669"/>
    <property type="project" value="UniProtKB-UniRule"/>
</dbReference>
<dbReference type="CDD" id="cd01398">
    <property type="entry name" value="RPI_A"/>
    <property type="match status" value="1"/>
</dbReference>
<dbReference type="FunFam" id="3.40.50.1360:FF:000001">
    <property type="entry name" value="Ribose-5-phosphate isomerase A"/>
    <property type="match status" value="1"/>
</dbReference>
<dbReference type="Gene3D" id="3.30.70.260">
    <property type="match status" value="1"/>
</dbReference>
<dbReference type="Gene3D" id="3.40.50.1360">
    <property type="match status" value="1"/>
</dbReference>
<dbReference type="HAMAP" id="MF_00170">
    <property type="entry name" value="Rib_5P_isom_A"/>
    <property type="match status" value="1"/>
</dbReference>
<dbReference type="InterPro" id="IPR037171">
    <property type="entry name" value="NagB/RpiA_transferase-like"/>
</dbReference>
<dbReference type="InterPro" id="IPR050262">
    <property type="entry name" value="Ribose-5P_isomerase"/>
</dbReference>
<dbReference type="InterPro" id="IPR020672">
    <property type="entry name" value="Ribose5P_isomerase_typA_subgr"/>
</dbReference>
<dbReference type="InterPro" id="IPR004788">
    <property type="entry name" value="Ribose5P_isomerase_type_A"/>
</dbReference>
<dbReference type="NCBIfam" id="NF001924">
    <property type="entry name" value="PRK00702.1"/>
    <property type="match status" value="1"/>
</dbReference>
<dbReference type="NCBIfam" id="TIGR00021">
    <property type="entry name" value="rpiA"/>
    <property type="match status" value="1"/>
</dbReference>
<dbReference type="PANTHER" id="PTHR43748">
    <property type="entry name" value="RIBOSE-5-PHOSPHATE ISOMERASE 3, CHLOROPLASTIC-RELATED"/>
    <property type="match status" value="1"/>
</dbReference>
<dbReference type="PANTHER" id="PTHR43748:SF3">
    <property type="entry name" value="RIBOSE-5-PHOSPHATE ISOMERASE 3, CHLOROPLASTIC-RELATED"/>
    <property type="match status" value="1"/>
</dbReference>
<dbReference type="Pfam" id="PF06026">
    <property type="entry name" value="Rib_5-P_isom_A"/>
    <property type="match status" value="1"/>
</dbReference>
<dbReference type="SUPFAM" id="SSF75445">
    <property type="entry name" value="D-ribose-5-phosphate isomerase (RpiA), lid domain"/>
    <property type="match status" value="1"/>
</dbReference>
<dbReference type="SUPFAM" id="SSF100950">
    <property type="entry name" value="NagB/RpiA/CoA transferase-like"/>
    <property type="match status" value="1"/>
</dbReference>
<keyword id="KW-0413">Isomerase</keyword>
<keyword id="KW-1185">Reference proteome</keyword>
<accession>Q81PL1</accession>
<accession>Q6HXS7</accession>
<accession>Q6KRU8</accession>
<sequence>MDLKQIAGEYAATFVKDGMKIGLGTGSTAYWTIQKLGQRVKEGLSIQAVPTSKETEALAQQLNIPLISLNDVQSLDLTIDGADEIDSNLQLIKGGGGALLREKIVASSSKELIIIVDESKVVTRLGTFPLPIEIIPFAWKQTESKIQSLGCQTTLRLKNNETFITDNNNMIIDCIFPNHIPTPSDLHKRLKMITGVVETGLFVNMTSKAIIGTKNGIQEL</sequence>
<organism>
    <name type="scientific">Bacillus anthracis</name>
    <dbReference type="NCBI Taxonomy" id="1392"/>
    <lineage>
        <taxon>Bacteria</taxon>
        <taxon>Bacillati</taxon>
        <taxon>Bacillota</taxon>
        <taxon>Bacilli</taxon>
        <taxon>Bacillales</taxon>
        <taxon>Bacillaceae</taxon>
        <taxon>Bacillus</taxon>
        <taxon>Bacillus cereus group</taxon>
    </lineage>
</organism>
<proteinExistence type="inferred from homology"/>
<feature type="chain" id="PRO_0000158382" description="Ribose-5-phosphate isomerase A">
    <location>
        <begin position="1"/>
        <end position="220"/>
    </location>
</feature>
<feature type="active site" description="Proton acceptor" evidence="1">
    <location>
        <position position="102"/>
    </location>
</feature>
<feature type="binding site" evidence="1">
    <location>
        <begin position="25"/>
        <end position="28"/>
    </location>
    <ligand>
        <name>substrate</name>
    </ligand>
</feature>
<feature type="binding site" evidence="1">
    <location>
        <begin position="80"/>
        <end position="83"/>
    </location>
    <ligand>
        <name>substrate</name>
    </ligand>
</feature>
<feature type="binding site" evidence="1">
    <location>
        <begin position="93"/>
        <end position="96"/>
    </location>
    <ligand>
        <name>substrate</name>
    </ligand>
</feature>
<feature type="binding site" evidence="1">
    <location>
        <position position="120"/>
    </location>
    <ligand>
        <name>substrate</name>
    </ligand>
</feature>
<name>RPIA_BACAN</name>